<keyword id="KW-1185">Reference proteome</keyword>
<keyword id="KW-0687">Ribonucleoprotein</keyword>
<keyword id="KW-0689">Ribosomal protein</keyword>
<keyword id="KW-0694">RNA-binding</keyword>
<keyword id="KW-0699">rRNA-binding</keyword>
<name>RL4_METAC</name>
<organism>
    <name type="scientific">Methanosarcina acetivorans (strain ATCC 35395 / DSM 2834 / JCM 12185 / C2A)</name>
    <dbReference type="NCBI Taxonomy" id="188937"/>
    <lineage>
        <taxon>Archaea</taxon>
        <taxon>Methanobacteriati</taxon>
        <taxon>Methanobacteriota</taxon>
        <taxon>Stenosarchaea group</taxon>
        <taxon>Methanomicrobia</taxon>
        <taxon>Methanosarcinales</taxon>
        <taxon>Methanosarcinaceae</taxon>
        <taxon>Methanosarcina</taxon>
    </lineage>
</organism>
<feature type="chain" id="PRO_0000129331" description="Large ribosomal subunit protein uL4">
    <location>
        <begin position="1"/>
        <end position="253"/>
    </location>
</feature>
<feature type="region of interest" description="Disordered" evidence="2">
    <location>
        <begin position="78"/>
        <end position="107"/>
    </location>
</feature>
<feature type="compositionally biased region" description="Basic residues" evidence="2">
    <location>
        <begin position="82"/>
        <end position="94"/>
    </location>
</feature>
<feature type="compositionally biased region" description="Basic and acidic residues" evidence="2">
    <location>
        <begin position="95"/>
        <end position="107"/>
    </location>
</feature>
<reference key="1">
    <citation type="journal article" date="2002" name="Genome Res.">
        <title>The genome of Methanosarcina acetivorans reveals extensive metabolic and physiological diversity.</title>
        <authorList>
            <person name="Galagan J.E."/>
            <person name="Nusbaum C."/>
            <person name="Roy A."/>
            <person name="Endrizzi M.G."/>
            <person name="Macdonald P."/>
            <person name="FitzHugh W."/>
            <person name="Calvo S."/>
            <person name="Engels R."/>
            <person name="Smirnov S."/>
            <person name="Atnoor D."/>
            <person name="Brown A."/>
            <person name="Allen N."/>
            <person name="Naylor J."/>
            <person name="Stange-Thomann N."/>
            <person name="DeArellano K."/>
            <person name="Johnson R."/>
            <person name="Linton L."/>
            <person name="McEwan P."/>
            <person name="McKernan K."/>
            <person name="Talamas J."/>
            <person name="Tirrell A."/>
            <person name="Ye W."/>
            <person name="Zimmer A."/>
            <person name="Barber R.D."/>
            <person name="Cann I."/>
            <person name="Graham D.E."/>
            <person name="Grahame D.A."/>
            <person name="Guss A.M."/>
            <person name="Hedderich R."/>
            <person name="Ingram-Smith C."/>
            <person name="Kuettner H.C."/>
            <person name="Krzycki J.A."/>
            <person name="Leigh J.A."/>
            <person name="Li W."/>
            <person name="Liu J."/>
            <person name="Mukhopadhyay B."/>
            <person name="Reeve J.N."/>
            <person name="Smith K."/>
            <person name="Springer T.A."/>
            <person name="Umayam L.A."/>
            <person name="White O."/>
            <person name="White R.H."/>
            <person name="de Macario E.C."/>
            <person name="Ferry J.G."/>
            <person name="Jarrell K.F."/>
            <person name="Jing H."/>
            <person name="Macario A.J.L."/>
            <person name="Paulsen I.T."/>
            <person name="Pritchett M."/>
            <person name="Sowers K.R."/>
            <person name="Swanson R.V."/>
            <person name="Zinder S.H."/>
            <person name="Lander E."/>
            <person name="Metcalf W.W."/>
            <person name="Birren B."/>
        </authorList>
    </citation>
    <scope>NUCLEOTIDE SEQUENCE [LARGE SCALE GENOMIC DNA]</scope>
    <source>
        <strain>ATCC 35395 / DSM 2834 / JCM 12185 / C2A</strain>
    </source>
</reference>
<dbReference type="EMBL" id="AE010299">
    <property type="protein sequence ID" value="AAM04498.1"/>
    <property type="molecule type" value="Genomic_DNA"/>
</dbReference>
<dbReference type="RefSeq" id="WP_011021102.1">
    <property type="nucleotide sequence ID" value="NC_003552.1"/>
</dbReference>
<dbReference type="SMR" id="Q8TRU6"/>
<dbReference type="FunCoup" id="Q8TRU6">
    <property type="interactions" value="176"/>
</dbReference>
<dbReference type="STRING" id="188937.MA_1073"/>
<dbReference type="EnsemblBacteria" id="AAM04498">
    <property type="protein sequence ID" value="AAM04498"/>
    <property type="gene ID" value="MA_1073"/>
</dbReference>
<dbReference type="GeneID" id="1472963"/>
<dbReference type="KEGG" id="mac:MA_1073"/>
<dbReference type="HOGENOM" id="CLU_026535_0_0_2"/>
<dbReference type="InParanoid" id="Q8TRU6"/>
<dbReference type="OrthoDB" id="10737at2157"/>
<dbReference type="PhylomeDB" id="Q8TRU6"/>
<dbReference type="Proteomes" id="UP000002487">
    <property type="component" value="Chromosome"/>
</dbReference>
<dbReference type="GO" id="GO:0022625">
    <property type="term" value="C:cytosolic large ribosomal subunit"/>
    <property type="evidence" value="ECO:0000318"/>
    <property type="project" value="GO_Central"/>
</dbReference>
<dbReference type="GO" id="GO:0003723">
    <property type="term" value="F:RNA binding"/>
    <property type="evidence" value="ECO:0000318"/>
    <property type="project" value="GO_Central"/>
</dbReference>
<dbReference type="GO" id="GO:0019843">
    <property type="term" value="F:rRNA binding"/>
    <property type="evidence" value="ECO:0007669"/>
    <property type="project" value="UniProtKB-UniRule"/>
</dbReference>
<dbReference type="GO" id="GO:0003735">
    <property type="term" value="F:structural constituent of ribosome"/>
    <property type="evidence" value="ECO:0000318"/>
    <property type="project" value="GO_Central"/>
</dbReference>
<dbReference type="GO" id="GO:0006412">
    <property type="term" value="P:translation"/>
    <property type="evidence" value="ECO:0007669"/>
    <property type="project" value="UniProtKB-UniRule"/>
</dbReference>
<dbReference type="FunFam" id="3.40.1370.10:FF:000011">
    <property type="entry name" value="50S ribosomal protein L4"/>
    <property type="match status" value="1"/>
</dbReference>
<dbReference type="Gene3D" id="3.40.1370.10">
    <property type="match status" value="1"/>
</dbReference>
<dbReference type="HAMAP" id="MF_01328_A">
    <property type="entry name" value="Ribosomal_uL4_A"/>
    <property type="match status" value="1"/>
</dbReference>
<dbReference type="InterPro" id="IPR002136">
    <property type="entry name" value="Ribosomal_uL4"/>
</dbReference>
<dbReference type="InterPro" id="IPR023574">
    <property type="entry name" value="Ribosomal_uL4_dom_sf"/>
</dbReference>
<dbReference type="InterPro" id="IPR013000">
    <property type="entry name" value="Ribosomal_uL4_euk/arc_CS"/>
</dbReference>
<dbReference type="InterPro" id="IPR045240">
    <property type="entry name" value="Ribosomal_uL4_euk/arch"/>
</dbReference>
<dbReference type="InterPro" id="IPR019970">
    <property type="entry name" value="Ribosomall_uL4-arc"/>
</dbReference>
<dbReference type="NCBIfam" id="TIGR03672">
    <property type="entry name" value="rpl4p_arch"/>
    <property type="match status" value="1"/>
</dbReference>
<dbReference type="PANTHER" id="PTHR19431">
    <property type="entry name" value="60S RIBOSOMAL PROTEIN L4"/>
    <property type="match status" value="1"/>
</dbReference>
<dbReference type="Pfam" id="PF00573">
    <property type="entry name" value="Ribosomal_L4"/>
    <property type="match status" value="1"/>
</dbReference>
<dbReference type="SUPFAM" id="SSF52166">
    <property type="entry name" value="Ribosomal protein L4"/>
    <property type="match status" value="1"/>
</dbReference>
<dbReference type="PROSITE" id="PS00939">
    <property type="entry name" value="RIBOSOMAL_L1E"/>
    <property type="match status" value="1"/>
</dbReference>
<sequence>MATAKTIDLTGKAVGEVELPAVFDADYRPDLIKKAVLAAQANRLQPYGPRLYSGMETSARGWGSGRGVSHVPRLVNSSRAARVPHAKGGRRAHPPKPEADRSEKVNTKERRYAIRSAIAATTDPTLVSLRGHIFEAELPIVAVNDLESLERTKQVIEFLEAAGLYEDVLRAKYGRHIRAGRGKLRGRKYKHKKSVLIVAGENTPILKAARNLSGVDVVTVDSLNAELLAPGTHAGRLTVWTESAIGKLEGAFQ</sequence>
<comment type="function">
    <text evidence="1">One of the primary rRNA binding proteins, this protein initially binds near the 5'-end of the 23S rRNA. It is important during the early stages of 50S assembly. It makes multiple contacts with different domains of the 23S rRNA in the assembled 50S subunit and ribosome.</text>
</comment>
<comment type="function">
    <text evidence="1">Forms part of the polypeptide exit tunnel.</text>
</comment>
<comment type="subunit">
    <text evidence="1">Part of the 50S ribosomal subunit.</text>
</comment>
<comment type="similarity">
    <text evidence="1">Belongs to the universal ribosomal protein uL4 family.</text>
</comment>
<proteinExistence type="inferred from homology"/>
<gene>
    <name evidence="1" type="primary">rpl4</name>
    <name type="ordered locus">MA_1073</name>
</gene>
<protein>
    <recommendedName>
        <fullName evidence="1">Large ribosomal subunit protein uL4</fullName>
    </recommendedName>
    <alternativeName>
        <fullName evidence="3">50S ribosomal protein L4</fullName>
    </alternativeName>
</protein>
<evidence type="ECO:0000255" key="1">
    <source>
        <dbReference type="HAMAP-Rule" id="MF_01328"/>
    </source>
</evidence>
<evidence type="ECO:0000256" key="2">
    <source>
        <dbReference type="SAM" id="MobiDB-lite"/>
    </source>
</evidence>
<evidence type="ECO:0000305" key="3"/>
<accession>Q8TRU6</accession>